<evidence type="ECO:0000255" key="1"/>
<evidence type="ECO:0000269" key="2">
    <source>
    </source>
</evidence>
<evidence type="ECO:0000269" key="3">
    <source>
    </source>
</evidence>
<evidence type="ECO:0000269" key="4">
    <source>
    </source>
</evidence>
<evidence type="ECO:0000303" key="5">
    <source>
    </source>
</evidence>
<evidence type="ECO:0000303" key="6">
    <source>
    </source>
</evidence>
<evidence type="ECO:0000303" key="7">
    <source>
    </source>
</evidence>
<evidence type="ECO:0000305" key="8">
    <source>
    </source>
</evidence>
<protein>
    <recommendedName>
        <fullName evidence="6">Cercosporin MFS transporter CTB4</fullName>
    </recommendedName>
    <alternativeName>
        <fullName evidence="7">Cercosporin toxin biosynthesis cluster protein 4</fullName>
    </alternativeName>
</protein>
<name>CTB4_CERNC</name>
<gene>
    <name evidence="6" type="primary">CTB4</name>
</gene>
<reference key="1">
    <citation type="journal article" date="2007" name="FEBS Lett.">
        <title>Deletion of a MFS transporter-like gene in Cercospora nicotianae reduces cercosporin toxin accumulation and fungal virulence.</title>
        <authorList>
            <person name="Choquer M."/>
            <person name="Lee M.H."/>
            <person name="Bau H.J."/>
            <person name="Chung K.R."/>
        </authorList>
    </citation>
    <scope>NUCLEOTIDE SEQUENCE [GENOMIC DNA]</scope>
    <scope>FUNCTION</scope>
    <scope>DISRUPTION PHENOTYPE</scope>
</reference>
<reference key="2">
    <citation type="journal article" date="2007" name="Mol. Microbiol.">
        <title>Molecular analysis of the cercosporin biosynthetic gene cluster in Cercospora nicotianae.</title>
        <authorList>
            <person name="Chen H."/>
            <person name="Lee M.H."/>
            <person name="Daub M.E."/>
            <person name="Chung K.R."/>
        </authorList>
    </citation>
    <scope>NUCLEOTIDE SEQUENCE [GENOMIC DNA]</scope>
    <scope>FUNCTION</scope>
    <scope>INDUCTION</scope>
</reference>
<reference key="3">
    <citation type="journal article" date="2000" name="Annu. Rev. Phytopathol.">
        <title>The photoactivated cercospora toxin cercosporin: contributions to plant disease and fundamental biology.</title>
        <authorList>
            <person name="Daub M.E."/>
            <person name="Ehrenshaft M."/>
        </authorList>
    </citation>
    <scope>REVIEW ON CERCOSPORIN</scope>
</reference>
<reference key="4">
    <citation type="journal article" date="2016" name="J. Am. Chem. Soc.">
        <title>Molecular characterization of the cercosporin biosynthetic pathway in the fungal plant pathogen Cercospora nicotianae.</title>
        <authorList>
            <person name="Newman A.G."/>
            <person name="Townsend C.A."/>
        </authorList>
    </citation>
    <scope>FUNCTION</scope>
</reference>
<dbReference type="EMBL" id="DQ991506">
    <property type="protein sequence ID" value="ABK64181.1"/>
    <property type="molecule type" value="Genomic_DNA"/>
</dbReference>
<dbReference type="SMR" id="A0ST42"/>
<dbReference type="TCDB" id="2.A.1.2.79">
    <property type="family name" value="the major facilitator superfamily (mfs)"/>
</dbReference>
<dbReference type="PHI-base" id="PHI:2329"/>
<dbReference type="PHI-base" id="PHI:737"/>
<dbReference type="GO" id="GO:0005886">
    <property type="term" value="C:plasma membrane"/>
    <property type="evidence" value="ECO:0007669"/>
    <property type="project" value="UniProtKB-SubCell"/>
</dbReference>
<dbReference type="GO" id="GO:0022857">
    <property type="term" value="F:transmembrane transporter activity"/>
    <property type="evidence" value="ECO:0007669"/>
    <property type="project" value="InterPro"/>
</dbReference>
<dbReference type="CDD" id="cd17323">
    <property type="entry name" value="MFS_Tpo1_MDR_like"/>
    <property type="match status" value="1"/>
</dbReference>
<dbReference type="FunFam" id="1.20.1250.20:FF:000011">
    <property type="entry name" value="MFS multidrug transporter, putative"/>
    <property type="match status" value="1"/>
</dbReference>
<dbReference type="Gene3D" id="1.20.1250.20">
    <property type="entry name" value="MFS general substrate transporter like domains"/>
    <property type="match status" value="1"/>
</dbReference>
<dbReference type="InterPro" id="IPR011701">
    <property type="entry name" value="MFS"/>
</dbReference>
<dbReference type="InterPro" id="IPR020846">
    <property type="entry name" value="MFS_dom"/>
</dbReference>
<dbReference type="InterPro" id="IPR036259">
    <property type="entry name" value="MFS_trans_sf"/>
</dbReference>
<dbReference type="PANTHER" id="PTHR23502">
    <property type="entry name" value="MAJOR FACILITATOR SUPERFAMILY"/>
    <property type="match status" value="1"/>
</dbReference>
<dbReference type="PANTHER" id="PTHR23502:SF47">
    <property type="entry name" value="MAJOR FACILITATOR SUPERFAMILY (MFS) PROFILE DOMAIN-CONTAINING PROTEIN-RELATED"/>
    <property type="match status" value="1"/>
</dbReference>
<dbReference type="Pfam" id="PF07690">
    <property type="entry name" value="MFS_1"/>
    <property type="match status" value="1"/>
</dbReference>
<dbReference type="SUPFAM" id="SSF103473">
    <property type="entry name" value="MFS general substrate transporter"/>
    <property type="match status" value="1"/>
</dbReference>
<dbReference type="PROSITE" id="PS50850">
    <property type="entry name" value="MFS"/>
    <property type="match status" value="1"/>
</dbReference>
<keyword id="KW-1003">Cell membrane</keyword>
<keyword id="KW-0472">Membrane</keyword>
<keyword id="KW-0812">Transmembrane</keyword>
<keyword id="KW-1133">Transmembrane helix</keyword>
<keyword id="KW-0813">Transport</keyword>
<keyword id="KW-0843">Virulence</keyword>
<feature type="chain" id="PRO_0000444968" description="Cercosporin MFS transporter CTB4">
    <location>
        <begin position="1"/>
        <end position="512"/>
    </location>
</feature>
<feature type="transmembrane region" description="Helical" evidence="1">
    <location>
        <begin position="72"/>
        <end position="92"/>
    </location>
</feature>
<feature type="transmembrane region" description="Helical" evidence="1">
    <location>
        <begin position="110"/>
        <end position="130"/>
    </location>
</feature>
<feature type="transmembrane region" description="Helical" evidence="1">
    <location>
        <begin position="142"/>
        <end position="162"/>
    </location>
</feature>
<feature type="transmembrane region" description="Helical" evidence="1">
    <location>
        <begin position="170"/>
        <end position="190"/>
    </location>
</feature>
<feature type="transmembrane region" description="Helical" evidence="1">
    <location>
        <begin position="202"/>
        <end position="222"/>
    </location>
</feature>
<feature type="transmembrane region" description="Helical" evidence="1">
    <location>
        <begin position="230"/>
        <end position="250"/>
    </location>
</feature>
<feature type="transmembrane region" description="Helical" evidence="1">
    <location>
        <begin position="306"/>
        <end position="326"/>
    </location>
</feature>
<feature type="transmembrane region" description="Helical" evidence="1">
    <location>
        <begin position="343"/>
        <end position="363"/>
    </location>
</feature>
<feature type="transmembrane region" description="Helical" evidence="1">
    <location>
        <begin position="383"/>
        <end position="403"/>
    </location>
</feature>
<feature type="transmembrane region" description="Helical" evidence="1">
    <location>
        <begin position="407"/>
        <end position="427"/>
    </location>
</feature>
<feature type="transmembrane region" description="Helical" evidence="1">
    <location>
        <begin position="456"/>
        <end position="476"/>
    </location>
</feature>
<feature type="transmembrane region" description="Helical" evidence="1">
    <location>
        <begin position="480"/>
        <end position="500"/>
    </location>
</feature>
<organism>
    <name type="scientific">Cercospora nicotianae</name>
    <name type="common">Barn spot disease fungus</name>
    <dbReference type="NCBI Taxonomy" id="29003"/>
    <lineage>
        <taxon>Eukaryota</taxon>
        <taxon>Fungi</taxon>
        <taxon>Dikarya</taxon>
        <taxon>Ascomycota</taxon>
        <taxon>Pezizomycotina</taxon>
        <taxon>Dothideomycetes</taxon>
        <taxon>Dothideomycetidae</taxon>
        <taxon>Mycosphaerellales</taxon>
        <taxon>Mycosphaerellaceae</taxon>
        <taxon>Cercospora</taxon>
    </lineage>
</organism>
<proteinExistence type="evidence at transcript level"/>
<sequence length="512" mass="55982">MAPPITDDDLDGLKQPYVTFSSGSASPPRSTAEAMDFEEQILEAIKSDAFLVDWIGEDDKGNPQNLPYWRKWVITMSLALYALSTTFSSSVFGAATHVLAEEFALPAETVVLGCTSLFMVGFATGPIFWGPFSEAFGRTRPLLAGYLGFAVLQLPIADARSLTSICILRFLGGFFGAAPSSILSGILADIWSPRERGFAMPTVGAFLTIGPILGPLIGSVLVQSVLGWRWIANVVAIASFLIALSTFPFLPETYTPLLLARRAERMRHMTRNWAYRSKSEEAQSSIGDFAERYLLRPARMLALEPILLMMTLYVSVSFGLLYNFFLAYPTSFIQERGWDQTTASLPLISILVGAIIAGALLSFSTNSRWAPNAKEGRPQETRLLLMMVGAVSLPAGMFLFAWTSSATMNPWPQILSGIPTGFGIHLINMQGMNYIIDSYKIYANSAIAANTFLRSLFAAGFPILATSMYAAIGVKWGTTILALLAVAMIPIPILFYYFGAKIRAKSKWQPPL</sequence>
<accession>A0ST42</accession>
<comment type="function">
    <text evidence="2 3 4 5">MFS transporter; part of the gene cluster that mediates the biosynthesis of cercosporin, a light-activated, non-host-selective toxin (PubMed:17250832, PubMed:17462021, PubMed:26938470). The perylenequinone chromophore of cercosporin absorbs light energy to attain an electronically-activated triplet state and produces active oxygen species such as the hydroxyl radical, superoxide, hydrogen peroxide or singlet oxygen upon reaction with oxygen molecules. These reactive oxygen species cause damage to various cellular components including lipids, proteins and nucleic acids (PubMed:11701851). Responsible for secretion and accumulation of cercosporin, but does not play any roles in self-protection against the toxicity of cercosporin (PubMed:17250832).</text>
</comment>
<comment type="subcellular location">
    <subcellularLocation>
        <location evidence="8">Cell membrane</location>
        <topology evidence="1">Multi-pass membrane protein</topology>
    </subcellularLocation>
</comment>
<comment type="induction">
    <text evidence="3">Expression is positively regulated by the cercosporin cluster-specific transcription factor CTB8 (PubMed:17462021). Expression is also affected by nitrogen and carbon sources and pH, and is also controlled by another transcription activator, CRG1, previously shown to regulate cercosporin production and resistance (PubMed:17462021).</text>
</comment>
<comment type="disruption phenotype">
    <text evidence="2">Reduces cercosporin toxin accumulation and fungal virulence.</text>
</comment>
<comment type="similarity">
    <text evidence="1">Belongs to the major facilitator superfamily. CAR1 family.</text>
</comment>